<gene>
    <name type="primary">rpcB</name>
</gene>
<feature type="initiator methionine" description="Removed" evidence="2">
    <location>
        <position position="1"/>
    </location>
</feature>
<feature type="chain" id="PRO_0000199166" description="R-phycocyanin-2 beta chain">
    <location>
        <begin position="2"/>
        <end position="172"/>
    </location>
</feature>
<feature type="binding site" description="covalent">
    <location>
        <position position="82"/>
    </location>
    <ligand>
        <name>(2R,3E)-phycocyanobilin</name>
        <dbReference type="ChEBI" id="CHEBI:85275"/>
    </ligand>
</feature>
<feature type="binding site" description="covalent">
    <location>
        <position position="153"/>
    </location>
    <ligand>
        <name>(2R,3E)-phycoerythrobilin</name>
        <dbReference type="ChEBI" id="CHEBI:85276"/>
    </ligand>
</feature>
<feature type="modified residue" description="N4-methylasparagine" evidence="1">
    <location>
        <position position="72"/>
    </location>
</feature>
<feature type="sequence conflict" description="In Ref. 2; AA sequence." evidence="3" ref="2">
    <original>E</original>
    <variation>D</variation>
    <location>
        <position position="159"/>
    </location>
</feature>
<keyword id="KW-0042">Antenna complex</keyword>
<keyword id="KW-0089">Bile pigment</keyword>
<keyword id="KW-0157">Chromophore</keyword>
<keyword id="KW-0903">Direct protein sequencing</keyword>
<keyword id="KW-0249">Electron transport</keyword>
<keyword id="KW-0472">Membrane</keyword>
<keyword id="KW-0488">Methylation</keyword>
<keyword id="KW-0602">Photosynthesis</keyword>
<keyword id="KW-0605">Phycobilisome</keyword>
<keyword id="KW-0793">Thylakoid</keyword>
<keyword id="KW-0813">Transport</keyword>
<sequence>MFDAFTKVVAQADARGQFISTSEIDALAAMVSDSNKRLDAVNRISSNASTIVASAARQLFAQQPALIAPGGNAYTSRRMAACLRDMEIILRYVTYSAFTGDASVMEDRCLNGLRETYLALGTPGASVAAGVNLMKDAALAIINDKAGISAGDCASLSSEIGTYFDRAAASVA</sequence>
<accession>P11395</accession>
<organism>
    <name type="scientific">Synechococcus sp. (strain WH8103)</name>
    <dbReference type="NCBI Taxonomy" id="29410"/>
    <lineage>
        <taxon>Bacteria</taxon>
        <taxon>Bacillati</taxon>
        <taxon>Cyanobacteriota</taxon>
        <taxon>Cyanophyceae</taxon>
        <taxon>Synechococcales</taxon>
        <taxon>Synechococcaceae</taxon>
        <taxon>Synechococcus</taxon>
    </lineage>
</organism>
<reference key="1">
    <citation type="journal article" date="1993" name="Plant Mol. Biol.">
        <title>Genes of the R-phycocyanin II locus of marine Synechococcus spp., and comparison of protein-chromophore interactions in phycocyanins differing in bilin composition.</title>
        <authorList>
            <person name="de Lorimier R."/>
            <person name="Wilbanks S.M."/>
            <person name="Glazer A.N."/>
        </authorList>
    </citation>
    <scope>NUCLEOTIDE SEQUENCE [GENOMIC DNA]</scope>
</reference>
<reference key="2">
    <citation type="journal article" date="1987" name="J. Biol. Chem.">
        <title>R-phycocyanin II, a new phycocyanin occurring in marine Synechococcus species. Identification of the terminal energy acceptor bilin in phycocyanins.</title>
        <authorList>
            <person name="Ong L.J."/>
            <person name="Glazer A.N."/>
        </authorList>
    </citation>
    <scope>PROTEIN SEQUENCE OF 2-21; 79-84 AND 147-166</scope>
    <scope>SUBUNIT</scope>
</reference>
<name>PHRB_SYNPZ</name>
<evidence type="ECO:0000250" key="1"/>
<evidence type="ECO:0000269" key="2">
    <source>
    </source>
</evidence>
<evidence type="ECO:0000305" key="3"/>
<protein>
    <recommendedName>
        <fullName>R-phycocyanin-2 beta chain</fullName>
    </recommendedName>
    <alternativeName>
        <fullName>R-phycocyanin II beta chain</fullName>
    </alternativeName>
</protein>
<comment type="function">
    <text>Light-harvesting photosynthetic bile pigment-protein from the phycobiliprotein complex.</text>
</comment>
<comment type="subunit">
    <text evidence="2">Heterodimer of an alpha and a beta chain.</text>
</comment>
<comment type="subcellular location">
    <subcellularLocation>
        <location>Cellular thylakoid membrane</location>
        <topology>Peripheral membrane protein</topology>
        <orientation>Cytoplasmic side</orientation>
    </subcellularLocation>
    <text>Part of the phycobilisome rod.</text>
</comment>
<comment type="PTM">
    <text>Contains two covalently linked bilin chromophores.</text>
</comment>
<comment type="similarity">
    <text evidence="3">Belongs to the phycobiliprotein family.</text>
</comment>
<dbReference type="EMBL" id="M95289">
    <property type="protein sequence ID" value="AAA27365.1"/>
    <property type="molecule type" value="Genomic_DNA"/>
</dbReference>
<dbReference type="SMR" id="P11395"/>
<dbReference type="OrthoDB" id="512145at2"/>
<dbReference type="GO" id="GO:0030089">
    <property type="term" value="C:phycobilisome"/>
    <property type="evidence" value="ECO:0007669"/>
    <property type="project" value="UniProtKB-KW"/>
</dbReference>
<dbReference type="GO" id="GO:0031676">
    <property type="term" value="C:plasma membrane-derived thylakoid membrane"/>
    <property type="evidence" value="ECO:0007669"/>
    <property type="project" value="UniProtKB-SubCell"/>
</dbReference>
<dbReference type="GO" id="GO:0015979">
    <property type="term" value="P:photosynthesis"/>
    <property type="evidence" value="ECO:0007669"/>
    <property type="project" value="UniProtKB-KW"/>
</dbReference>
<dbReference type="Gene3D" id="1.10.490.20">
    <property type="entry name" value="Phycocyanins"/>
    <property type="match status" value="1"/>
</dbReference>
<dbReference type="InterPro" id="IPR009050">
    <property type="entry name" value="Globin-like_sf"/>
</dbReference>
<dbReference type="InterPro" id="IPR012128">
    <property type="entry name" value="Phycobilisome_asu/bsu"/>
</dbReference>
<dbReference type="InterPro" id="IPR038719">
    <property type="entry name" value="Phycobilisome_asu/bsu_sf"/>
</dbReference>
<dbReference type="InterPro" id="IPR006247">
    <property type="entry name" value="Phycocyanin_b"/>
</dbReference>
<dbReference type="NCBIfam" id="TIGR01339">
    <property type="entry name" value="phycocy_beta"/>
    <property type="match status" value="1"/>
</dbReference>
<dbReference type="PANTHER" id="PTHR34011:SF7">
    <property type="entry name" value="C-PHYCOCYANIN BETA SUBUNIT"/>
    <property type="match status" value="1"/>
</dbReference>
<dbReference type="PANTHER" id="PTHR34011">
    <property type="entry name" value="PHYCOBILISOME 32.1 KDA LINKER POLYPEPTIDE, PHYCOCYANIN-ASSOCIATED, ROD 2-RELATED"/>
    <property type="match status" value="1"/>
</dbReference>
<dbReference type="Pfam" id="PF00502">
    <property type="entry name" value="Phycobilisome"/>
    <property type="match status" value="1"/>
</dbReference>
<dbReference type="PIRSF" id="PIRSF000081">
    <property type="entry name" value="Phycocyanin"/>
    <property type="match status" value="1"/>
</dbReference>
<dbReference type="SUPFAM" id="SSF46458">
    <property type="entry name" value="Globin-like"/>
    <property type="match status" value="1"/>
</dbReference>
<proteinExistence type="evidence at protein level"/>